<feature type="chain" id="PRO_0000215327" description="Transient receptor potential cation channel subfamily M member 2">
    <location>
        <begin position="1"/>
        <end position="1506"/>
    </location>
</feature>
<feature type="topological domain" description="Cytoplasmic" evidence="19">
    <location>
        <begin position="1"/>
        <end position="750"/>
    </location>
</feature>
<feature type="intramembrane region" evidence="3">
    <location>
        <begin position="751"/>
        <end position="767"/>
    </location>
</feature>
<feature type="topological domain" description="Cytoplasmic" evidence="19">
    <location>
        <begin position="768"/>
        <end position="792"/>
    </location>
</feature>
<feature type="transmembrane region" description="Helical" evidence="3">
    <location>
        <begin position="793"/>
        <end position="813"/>
    </location>
</feature>
<feature type="topological domain" description="Extracellular" evidence="19">
    <location>
        <begin position="814"/>
        <end position="824"/>
    </location>
</feature>
<feature type="transmembrane region" description="Helical" evidence="3">
    <location>
        <begin position="825"/>
        <end position="845"/>
    </location>
</feature>
<feature type="topological domain" description="Cytoplasmic" evidence="19">
    <location>
        <begin position="846"/>
        <end position="864"/>
    </location>
</feature>
<feature type="transmembrane region" description="Helical" evidence="3">
    <location>
        <begin position="865"/>
        <end position="885"/>
    </location>
</feature>
<feature type="topological domain" description="Extracellular" evidence="19">
    <location>
        <begin position="886"/>
        <end position="893"/>
    </location>
</feature>
<feature type="transmembrane region" description="Helical" evidence="3">
    <location>
        <begin position="894"/>
        <end position="914"/>
    </location>
</feature>
<feature type="topological domain" description="Cytoplasmic" evidence="19">
    <location>
        <begin position="915"/>
        <end position="926"/>
    </location>
</feature>
<feature type="transmembrane region" description="Helical" evidence="3">
    <location>
        <begin position="927"/>
        <end position="947"/>
    </location>
</feature>
<feature type="topological domain" description="Extracellular" evidence="19">
    <location>
        <begin position="948"/>
        <end position="967"/>
    </location>
</feature>
<feature type="intramembrane region" description="Pore-forming" evidence="3">
    <location>
        <begin position="968"/>
        <end position="982"/>
    </location>
</feature>
<feature type="topological domain" description="Extracellular" evidence="19">
    <location>
        <begin position="983"/>
        <end position="1019"/>
    </location>
</feature>
<feature type="transmembrane region" description="Helical" evidence="3">
    <location>
        <begin position="1020"/>
        <end position="1041"/>
    </location>
</feature>
<feature type="topological domain" description="Cytoplasmic" evidence="19">
    <location>
        <begin position="1042"/>
        <end position="1076"/>
    </location>
</feature>
<feature type="intramembrane region" evidence="3">
    <location>
        <begin position="1077"/>
        <end position="1095"/>
    </location>
</feature>
<feature type="topological domain" description="Cytoplasmic" evidence="19">
    <location>
        <begin position="1096"/>
        <end position="1506"/>
    </location>
</feature>
<feature type="domain" description="Nudix hydrolase" evidence="4">
    <location>
        <begin position="1350"/>
        <end position="1501"/>
    </location>
</feature>
<feature type="region of interest" description="Disordered" evidence="5">
    <location>
        <begin position="1"/>
        <end position="22"/>
    </location>
</feature>
<feature type="short sequence motif" description="Selectivity filter" evidence="3">
    <location>
        <begin position="976"/>
        <end position="979"/>
    </location>
</feature>
<feature type="short sequence motif" description="Nudix box" evidence="4">
    <location>
        <begin position="1386"/>
        <end position="1407"/>
    </location>
</feature>
<feature type="compositionally biased region" description="Basic and acidic residues" evidence="5">
    <location>
        <begin position="1"/>
        <end position="11"/>
    </location>
</feature>
<feature type="binding site" evidence="3">
    <location>
        <position position="173"/>
    </location>
    <ligand>
        <name>ADP-D-ribose</name>
        <dbReference type="ChEBI" id="CHEBI:57967"/>
        <label>1</label>
    </ligand>
</feature>
<feature type="binding site" evidence="3">
    <location>
        <position position="178"/>
    </location>
    <ligand>
        <name>ADP-D-ribose</name>
        <dbReference type="ChEBI" id="CHEBI:57967"/>
        <label>1</label>
    </ligand>
</feature>
<feature type="binding site" evidence="3">
    <location>
        <position position="301"/>
    </location>
    <ligand>
        <name>ADP-D-ribose</name>
        <dbReference type="ChEBI" id="CHEBI:57967"/>
        <label>1</label>
    </ligand>
</feature>
<feature type="binding site" evidence="3">
    <location>
        <position position="332"/>
    </location>
    <ligand>
        <name>ADP-D-ribose</name>
        <dbReference type="ChEBI" id="CHEBI:57967"/>
        <label>1</label>
    </ligand>
</feature>
<feature type="binding site" evidence="3">
    <location>
        <position position="335"/>
    </location>
    <ligand>
        <name>ADP-D-ribose</name>
        <dbReference type="ChEBI" id="CHEBI:57967"/>
        <label>1</label>
    </ligand>
</feature>
<feature type="binding site" evidence="1">
    <location>
        <position position="840"/>
    </location>
    <ligand>
        <name>Ca(2+)</name>
        <dbReference type="ChEBI" id="CHEBI:29108"/>
    </ligand>
</feature>
<feature type="binding site" evidence="1">
    <location>
        <position position="843"/>
    </location>
    <ligand>
        <name>Ca(2+)</name>
        <dbReference type="ChEBI" id="CHEBI:29108"/>
    </ligand>
</feature>
<feature type="binding site" evidence="1">
    <location>
        <position position="866"/>
    </location>
    <ligand>
        <name>Ca(2+)</name>
        <dbReference type="ChEBI" id="CHEBI:29108"/>
    </ligand>
</feature>
<feature type="binding site" evidence="1">
    <location>
        <position position="1070"/>
    </location>
    <ligand>
        <name>Ca(2+)</name>
        <dbReference type="ChEBI" id="CHEBI:29108"/>
    </ligand>
</feature>
<feature type="binding site" evidence="3">
    <location>
        <position position="1378"/>
    </location>
    <ligand>
        <name>ADP-D-ribose</name>
        <dbReference type="ChEBI" id="CHEBI:57967"/>
        <label>2</label>
    </ligand>
</feature>
<feature type="binding site" evidence="3">
    <location>
        <position position="1427"/>
    </location>
    <ligand>
        <name>ADP-D-ribose</name>
        <dbReference type="ChEBI" id="CHEBI:57967"/>
        <label>2</label>
    </ligand>
</feature>
<feature type="binding site" evidence="3">
    <location>
        <position position="1429"/>
    </location>
    <ligand>
        <name>ADP-D-ribose</name>
        <dbReference type="ChEBI" id="CHEBI:57967"/>
        <label>2</label>
    </ligand>
</feature>
<feature type="binding site" evidence="3">
    <location>
        <position position="1488"/>
    </location>
    <ligand>
        <name>ADP-D-ribose</name>
        <dbReference type="ChEBI" id="CHEBI:57967"/>
        <label>2</label>
    </ligand>
</feature>
<feature type="binding site" evidence="3">
    <location>
        <position position="1490"/>
    </location>
    <ligand>
        <name>ADP-D-ribose</name>
        <dbReference type="ChEBI" id="CHEBI:57967"/>
        <label>2</label>
    </ligand>
</feature>
<feature type="modified residue" description="Phosphothreonine" evidence="18">
    <location>
        <position position="738"/>
    </location>
</feature>
<feature type="disulfide bond" evidence="1">
    <location>
        <begin position="993"/>
        <end position="1005"/>
    </location>
</feature>
<feature type="mutagenesis site" description="Abolishes lowering of temperature threshold for activation in response to reactive oxygen species." evidence="13">
    <original>M</original>
    <variation>A</variation>
    <location>
        <position position="214"/>
    </location>
</feature>
<feature type="sequence conflict" description="In Ref. 1; CAC69081." ref="1">
    <original>Q</original>
    <variation>QY</variation>
    <location>
        <position position="843"/>
    </location>
</feature>
<keyword id="KW-0106">Calcium</keyword>
<keyword id="KW-0107">Calcium channel</keyword>
<keyword id="KW-0109">Calcium transport</keyword>
<keyword id="KW-1003">Cell membrane</keyword>
<keyword id="KW-0966">Cell projection</keyword>
<keyword id="KW-0968">Cytoplasmic vesicle</keyword>
<keyword id="KW-1015">Disulfide bond</keyword>
<keyword id="KW-0407">Ion channel</keyword>
<keyword id="KW-0406">Ion transport</keyword>
<keyword id="KW-0458">Lysosome</keyword>
<keyword id="KW-0472">Membrane</keyword>
<keyword id="KW-0479">Metal-binding</keyword>
<keyword id="KW-0597">Phosphoprotein</keyword>
<keyword id="KW-1185">Reference proteome</keyword>
<keyword id="KW-0915">Sodium</keyword>
<keyword id="KW-0894">Sodium channel</keyword>
<keyword id="KW-0739">Sodium transport</keyword>
<keyword id="KW-0812">Transmembrane</keyword>
<keyword id="KW-1133">Transmembrane helix</keyword>
<keyword id="KW-0813">Transport</keyword>
<proteinExistence type="evidence at protein level"/>
<name>TRPM2_MOUSE</name>
<sequence>MESLDRRRTGSEQEEGFGVQSRRATDLGMVPNLRRSNSSLCKSRRFLCSFSSEKQENLSSWIPENIKKKECVYFVESSKLSDAGKVVCACGYTHEQHLEVAIKPHTFQGKEWDPKKHVQEMPTDAFGDIVFTDLSQKVGKYVRVSQDTPSSVIYQLMTQHWGLDVPNLLISVTGGAKNFNMKLRLKSIFRRGLVKVAQTTGAWIITGGSHTGVMKQVGEAVRDFSLSSSCKEGEVITIGVATWGTIHNREGLIHPMGGFPAEYMLDEEGQGNLTCLDSNHSHFILVDDGTHGQYGVEIPLRTKLEKFISEQTKERGGVAIKIPIVCVVLEGGPGTLHTIYNAINNGTPCVIVEGSGRVADVIAQVATLPVSEITISLIQQKLSIFFQEMFETFTENQIVEWTKKIQDIVRRRQLLTIFREGKDGQQDVDVAILQALLKASRSQDHFGHENWDHQLKLAVAWNRVDIARSEIFTDEWQWKPADLHPMMTAALISNKPEFVRLFLENGVRLKEFVTWDTLLCLYENLEPSCLFHSKLQKVLAEEQRLAYASATPRLHMHHVAQVLRELLGDSTQLLYPRPRYTDRPRLSMTVPHIKLNVQGVSLRSLYKRSTGHVTFTIDPVRDLLIWAVIQNHRELAGIIWAQSQDCTAAALACSKILKELSKEEEDTDSSEEMLALADEFEHRAIGVFTECYRKDEERAQKLLVRVSEAWGKTTCLQLALEAKDMKFVSHGGIQAFLTKVWWGQLCVDNGLWRIILCMLAFPLLFTGFISFREKRLQALCRPARVRAFFNAPVVIFHMNILSYFAFLCLFAYVLMVDFQPSPSWCEYLIYLWLFSLVCEETRQLFYDPDGCGLMKMASLYFSDFWNKLDVGAILLFIVGLTCRLIPATLYPGRIILSLDFIMFCLRLMHIFTISKTLGPKIIIVKRMMKDVFFFLFLLAVWVVSFGVAKQAILIHNESRVDWIFRGVVYHSYLTIFGQIPTYIDGVNFSMDQCSPNGTDPYKPKCPESDWTGQAPAFPEWLTVTLLCLYLLFANILLLNLLIAMFNYTFQEVQEHTDQIWKFQRHDLIEEYHGRPPAPPPLILLSHLQLLIKRIVLKIPAKRHKQLKNKLEKNEETALLSWELYLKENYLQNQQYQQKQRPEQKIQDISEKVDTMVDLLDMDQVKRSGSTEQRLASLEEQVTQVTRALHWIVTTLKDSGFGSGAGALTLAPQRAFDEPDAELSIRRKVEEPGDGYHVSARHLLYPNARIMRFPVPNEKVPWAAEFLIYDPPFYTAEKDVALTDPVGDTAEPLSKISYNVVDGPTDRRSFHGVYVVEYGFPLNPMGRTGLRGRGSLSWFGPNHTLQPVVTRWKRNQGGAICRKSVRKMLEVLVMKLPRSEHWALPGGSREPGEMLPRKLKRVLRQEFWVAFETLLMQGTEVYKGYVDDPRNTDNAWIETVAVSIHFQDQNDMELKRLEENLHTHDPKELTRDLKLSTEWQVVDRRIPLYANHKTILQKVASLFGAHF</sequence>
<organism>
    <name type="scientific">Mus musculus</name>
    <name type="common">Mouse</name>
    <dbReference type="NCBI Taxonomy" id="10090"/>
    <lineage>
        <taxon>Eukaryota</taxon>
        <taxon>Metazoa</taxon>
        <taxon>Chordata</taxon>
        <taxon>Craniata</taxon>
        <taxon>Vertebrata</taxon>
        <taxon>Euteleostomi</taxon>
        <taxon>Mammalia</taxon>
        <taxon>Eutheria</taxon>
        <taxon>Euarchontoglires</taxon>
        <taxon>Glires</taxon>
        <taxon>Rodentia</taxon>
        <taxon>Myomorpha</taxon>
        <taxon>Muroidea</taxon>
        <taxon>Muridae</taxon>
        <taxon>Murinae</taxon>
        <taxon>Mus</taxon>
        <taxon>Mus</taxon>
    </lineage>
</organism>
<gene>
    <name type="primary">Trpm2</name>
    <name type="synonym">Ltrpc2</name>
    <name type="synonym">Trpc7</name>
</gene>
<protein>
    <recommendedName>
        <fullName>Transient receptor potential cation channel subfamily M member 2</fullName>
    </recommendedName>
    <alternativeName>
        <fullName>Long transient receptor potential channel 2</fullName>
        <shortName>LTrpC-2</shortName>
        <shortName>LTrpC2</shortName>
    </alternativeName>
    <alternativeName>
        <fullName>Transient receptor potential channel 7</fullName>
        <shortName>TrpC7</shortName>
    </alternativeName>
</protein>
<accession>Q91YD4</accession>
<accession>Q5KTC0</accession>
<reference key="1">
    <citation type="submission" date="2001-08" db="EMBL/GenBank/DDBJ databases">
        <authorList>
            <person name="Kashuba V."/>
        </authorList>
    </citation>
    <scope>NUCLEOTIDE SEQUENCE [MRNA]</scope>
    <source>
        <strain>BALB/cJ</strain>
    </source>
</reference>
<reference evidence="21" key="2">
    <citation type="journal article" date="2005" name="Biochem. Biophys. Res. Commun.">
        <title>Characterization of human and mouse TRPM2 genes: identification of a novel N-terminal truncated protein specifically expressed in human striatum.</title>
        <authorList>
            <person name="Uemura T."/>
            <person name="Kudoh J."/>
            <person name="Noda S."/>
            <person name="Kanba S."/>
            <person name="Shimizu N."/>
        </authorList>
    </citation>
    <scope>NUCLEOTIDE SEQUENCE [MRNA]</scope>
    <scope>TISSUE SPECIFICITY</scope>
    <source>
        <strain evidence="21">BALB/cJ</strain>
        <tissue evidence="21">Brain</tissue>
    </source>
</reference>
<reference evidence="22" key="3">
    <citation type="journal article" date="2006" name="Neuropharmacology">
        <title>Characterisation of recombinant rat TRPM2 and a TRPM2-like conductance in cultured rat striatal neurones.</title>
        <authorList>
            <person name="Hill K."/>
            <person name="Tigue N.J."/>
            <person name="Kelsell R.E."/>
            <person name="Benham C.D."/>
            <person name="McNulty S."/>
            <person name="Schaefer M."/>
            <person name="Randall A.D."/>
        </authorList>
    </citation>
    <scope>NUCLEOTIDE SEQUENCE [MRNA]</scope>
    <source>
        <strain evidence="22">BALB/cJ</strain>
    </source>
</reference>
<reference key="4">
    <citation type="journal article" date="2009" name="PLoS Biol.">
        <title>Lineage-specific biology revealed by a finished genome assembly of the mouse.</title>
        <authorList>
            <person name="Church D.M."/>
            <person name="Goodstadt L."/>
            <person name="Hillier L.W."/>
            <person name="Zody M.C."/>
            <person name="Goldstein S."/>
            <person name="She X."/>
            <person name="Bult C.J."/>
            <person name="Agarwala R."/>
            <person name="Cherry J.L."/>
            <person name="DiCuccio M."/>
            <person name="Hlavina W."/>
            <person name="Kapustin Y."/>
            <person name="Meric P."/>
            <person name="Maglott D."/>
            <person name="Birtle Z."/>
            <person name="Marques A.C."/>
            <person name="Graves T."/>
            <person name="Zhou S."/>
            <person name="Teague B."/>
            <person name="Potamousis K."/>
            <person name="Churas C."/>
            <person name="Place M."/>
            <person name="Herschleb J."/>
            <person name="Runnheim R."/>
            <person name="Forrest D."/>
            <person name="Amos-Landgraf J."/>
            <person name="Schwartz D.C."/>
            <person name="Cheng Z."/>
            <person name="Lindblad-Toh K."/>
            <person name="Eichler E.E."/>
            <person name="Ponting C.P."/>
        </authorList>
    </citation>
    <scope>NUCLEOTIDE SEQUENCE [LARGE SCALE GENOMIC DNA]</scope>
    <source>
        <strain>C57BL/6J</strain>
    </source>
</reference>
<reference key="5">
    <citation type="submission" date="2005-09" db="EMBL/GenBank/DDBJ databases">
        <authorList>
            <person name="Mural R.J."/>
            <person name="Adams M.D."/>
            <person name="Myers E.W."/>
            <person name="Smith H.O."/>
            <person name="Venter J.C."/>
        </authorList>
    </citation>
    <scope>NUCLEOTIDE SEQUENCE [LARGE SCALE GENOMIC DNA]</scope>
</reference>
<reference key="6">
    <citation type="journal article" date="2004" name="Genome Res.">
        <title>The status, quality, and expansion of the NIH full-length cDNA project: the Mammalian Gene Collection (MGC).</title>
        <authorList>
            <consortium name="The MGC Project Team"/>
        </authorList>
    </citation>
    <scope>NUCLEOTIDE SEQUENCE [LARGE SCALE MRNA]</scope>
    <source>
        <tissue evidence="20">Brain</tissue>
    </source>
</reference>
<reference key="7">
    <citation type="journal article" date="2002" name="Mol. Cell">
        <title>LTRPC2 Ca2+-permeable channel activated by changes in redox status confers susceptibility to cell death.</title>
        <authorList>
            <person name="Hara Y."/>
            <person name="Wakamori M."/>
            <person name="Ishii M."/>
            <person name="Maeno E."/>
            <person name="Nishida M."/>
            <person name="Yoshida T."/>
            <person name="Yamada H."/>
            <person name="Shimizu S."/>
            <person name="Mori E."/>
            <person name="Kudoh J."/>
            <person name="Shimizu N."/>
            <person name="Kurose H."/>
            <person name="Okada Y."/>
            <person name="Imoto K."/>
            <person name="Mori Y."/>
        </authorList>
    </citation>
    <scope>FUNCTION</scope>
    <scope>SUBCELLULAR LOCATION</scope>
    <scope>TISSUE SPECIFICITY</scope>
</reference>
<reference key="8">
    <citation type="journal article" date="2006" name="EMBO J.">
        <title>TRPM2 activation by cyclic ADP-ribose at body temperature is involved in insulin secretion.</title>
        <authorList>
            <person name="Togashi K."/>
            <person name="Hara Y."/>
            <person name="Tominaga T."/>
            <person name="Higashi T."/>
            <person name="Konishi Y."/>
            <person name="Mori Y."/>
            <person name="Tominaga M."/>
        </authorList>
    </citation>
    <scope>TISSUE SPECIFICITY</scope>
</reference>
<reference key="9">
    <citation type="journal article" date="2009" name="Sci. Signal.">
        <title>TRPM2 functions as a lysosomal Ca2+-release channel in beta cells.</title>
        <authorList>
            <person name="Lange I."/>
            <person name="Yamamoto S."/>
            <person name="Partida-Sanchez S."/>
            <person name="Mori Y."/>
            <person name="Fleig A."/>
            <person name="Penner R."/>
        </authorList>
    </citation>
    <scope>FUNCTION</scope>
    <scope>SUBCELLULAR LOCATION</scope>
</reference>
<reference key="10">
    <citation type="journal article" date="2011" name="Diabetes">
        <title>Lack of TRPM2 impaired insulin secretion and glucose metabolisms in mice.</title>
        <authorList>
            <person name="Uchida K."/>
            <person name="Dezaki K."/>
            <person name="Damdindorj B."/>
            <person name="Inada H."/>
            <person name="Shiuchi T."/>
            <person name="Mori Y."/>
            <person name="Yada T."/>
            <person name="Minokoshi Y."/>
            <person name="Tominaga M."/>
        </authorList>
    </citation>
    <scope>DISRUPTION PHENOTYPE</scope>
    <scope>TISSUE SPECIFICITY</scope>
</reference>
<reference key="11">
    <citation type="journal article" date="2011" name="FASEB J.">
        <title>Dendritic cell maturation and chemotaxis is regulated by TRPM2-mediated lysosomal Ca2+ release.</title>
        <authorList>
            <person name="Sumoza-Toledo A."/>
            <person name="Lange I."/>
            <person name="Cortado H."/>
            <person name="Bhagat H."/>
            <person name="Mori Y."/>
            <person name="Fleig A."/>
            <person name="Penner R."/>
            <person name="Partida-Sanchez S."/>
        </authorList>
    </citation>
    <scope>FUNCTION</scope>
    <scope>SUBCELLULAR LOCATION</scope>
    <scope>TISSUE SPECIFICITY</scope>
</reference>
<reference key="12">
    <citation type="journal article" date="2011" name="Proc. Natl. Acad. Sci. U.S.A.">
        <title>Transient receptor potential melastatin 2 (TRPM2) ion channel is required for innate immunity against Listeria monocytogenes.</title>
        <authorList>
            <person name="Knowles H."/>
            <person name="Heizer J.W."/>
            <person name="Li Y."/>
            <person name="Chapman K."/>
            <person name="Ogden C.A."/>
            <person name="Andreasen K."/>
            <person name="Shapland E."/>
            <person name="Kucera G."/>
            <person name="Mogan J."/>
            <person name="Humann J."/>
            <person name="Lenz L.L."/>
            <person name="Morrison A.D."/>
            <person name="Perraud A.L."/>
        </authorList>
    </citation>
    <scope>FUNCTION</scope>
    <scope>DISRUPTION PHENOTYPE</scope>
</reference>
<reference key="13">
    <citation type="journal article" date="2012" name="Proc. Natl. Acad. Sci. U.S.A.">
        <title>Redox signal-mediated sensitization of transient receptor potential melastatin 2 (TRPM2) to temperature affects macrophage functions.</title>
        <authorList>
            <person name="Kashio M."/>
            <person name="Sokabe T."/>
            <person name="Shintaku K."/>
            <person name="Uematsu T."/>
            <person name="Fukuta N."/>
            <person name="Kobayashi N."/>
            <person name="Mori Y."/>
            <person name="Tominaga M."/>
        </authorList>
    </citation>
    <scope>FUNCTION</scope>
    <scope>SUBCELLULAR LOCATION</scope>
    <scope>MUTAGENESIS OF MET-214</scope>
</reference>
<reference key="14">
    <citation type="journal article" date="2015" name="Biochem. J.">
        <title>TRPM2-mediated intracellular Zn2+ release triggers pancreatic beta-cell death.</title>
        <authorList>
            <person name="Manna P.T."/>
            <person name="Munsey T.S."/>
            <person name="Abuarab N."/>
            <person name="Li F."/>
            <person name="Asipu A."/>
            <person name="Howell G."/>
            <person name="Sedo A."/>
            <person name="Yang W."/>
            <person name="Naylor J."/>
            <person name="Beech D.J."/>
            <person name="Jiang L.H."/>
            <person name="Sivaprasadarao A."/>
        </authorList>
    </citation>
    <scope>FUNCTION</scope>
</reference>
<reference key="15">
    <citation type="journal article" date="2015" name="J. Biol. Chem.">
        <title>Redox signal-mediated enhancement of the temperature sensitivity of transient receptor potential melastatin 2 (TRPM2) elevates glucose-induced insulin secretion from pancreatic islets.</title>
        <authorList>
            <person name="Kashio M."/>
            <person name="Tominaga M."/>
        </authorList>
    </citation>
    <scope>FUNCTION</scope>
</reference>
<reference key="16">
    <citation type="journal article" date="2016" name="Nature">
        <title>The TRPM2 ion channel is required for sensitivity to warmth.</title>
        <authorList>
            <person name="Tan C.H."/>
            <person name="McNaughton P.A."/>
        </authorList>
    </citation>
    <scope>DISRUPTION PHENOTYPE</scope>
    <scope>FUNCTION</scope>
</reference>
<reference key="17">
    <citation type="journal article" date="2016" name="Science">
        <title>The TRPM2 channel is a hypothalamic heat sensor that limits fever and can drive hypothermia.</title>
        <authorList>
            <person name="Song K."/>
            <person name="Wang H."/>
            <person name="Kamm G.B."/>
            <person name="Pohle J."/>
            <person name="de Castro Reis F."/>
            <person name="Heppenstall P."/>
            <person name="Wende H."/>
            <person name="Siemens J."/>
        </authorList>
    </citation>
    <scope>DISRUPTION PHENOTYPE</scope>
    <scope>FUNCTION</scope>
    <scope>TISSUE SPECIFICITY</scope>
</reference>
<reference key="18">
    <citation type="journal article" date="2022" name="J. Physiol. (Lond.)">
        <title>Protein kinase C-mediated phosphorylation of transient receptor potential melastatin type 2 Thr738 counteracts the effect of cytosolic Ca2+ and elevates the temperature threshold.</title>
        <authorList>
            <person name="Kashio M."/>
            <person name="Masubuchi S."/>
            <person name="Tominaga M."/>
        </authorList>
    </citation>
    <scope>PHOSPHORYLATION AT THR-738</scope>
</reference>
<evidence type="ECO:0000250" key="1">
    <source>
        <dbReference type="UniProtKB" id="A0A0R4IMY7"/>
    </source>
</evidence>
<evidence type="ECO:0000250" key="2">
    <source>
        <dbReference type="UniProtKB" id="E9PTA2"/>
    </source>
</evidence>
<evidence type="ECO:0000250" key="3">
    <source>
        <dbReference type="UniProtKB" id="O94759"/>
    </source>
</evidence>
<evidence type="ECO:0000255" key="4">
    <source>
        <dbReference type="PROSITE-ProRule" id="PRU00794"/>
    </source>
</evidence>
<evidence type="ECO:0000256" key="5">
    <source>
        <dbReference type="SAM" id="MobiDB-lite"/>
    </source>
</evidence>
<evidence type="ECO:0000269" key="6">
    <source>
    </source>
</evidence>
<evidence type="ECO:0000269" key="7">
    <source>
    </source>
</evidence>
<evidence type="ECO:0000269" key="8">
    <source>
    </source>
</evidence>
<evidence type="ECO:0000269" key="9">
    <source>
    </source>
</evidence>
<evidence type="ECO:0000269" key="10">
    <source>
    </source>
</evidence>
<evidence type="ECO:0000269" key="11">
    <source>
    </source>
</evidence>
<evidence type="ECO:0000269" key="12">
    <source>
    </source>
</evidence>
<evidence type="ECO:0000269" key="13">
    <source>
    </source>
</evidence>
<evidence type="ECO:0000269" key="14">
    <source>
    </source>
</evidence>
<evidence type="ECO:0000269" key="15">
    <source>
    </source>
</evidence>
<evidence type="ECO:0000269" key="16">
    <source>
    </source>
</evidence>
<evidence type="ECO:0000269" key="17">
    <source>
    </source>
</evidence>
<evidence type="ECO:0000269" key="18">
    <source>
    </source>
</evidence>
<evidence type="ECO:0000305" key="19"/>
<evidence type="ECO:0000312" key="20">
    <source>
        <dbReference type="EMBL" id="AAI41392.1"/>
    </source>
</evidence>
<evidence type="ECO:0000312" key="21">
    <source>
        <dbReference type="EMBL" id="BAD83707.1"/>
    </source>
</evidence>
<evidence type="ECO:0000312" key="22">
    <source>
        <dbReference type="EMBL" id="CAI47592.1"/>
    </source>
</evidence>
<dbReference type="EMBL" id="AJ344343">
    <property type="protein sequence ID" value="CAC69081.1"/>
    <property type="molecule type" value="mRNA"/>
</dbReference>
<dbReference type="EMBL" id="AB166747">
    <property type="protein sequence ID" value="BAD83707.1"/>
    <property type="molecule type" value="mRNA"/>
</dbReference>
<dbReference type="EMBL" id="AJ878415">
    <property type="protein sequence ID" value="CAI47592.1"/>
    <property type="molecule type" value="mRNA"/>
</dbReference>
<dbReference type="EMBL" id="AC153507">
    <property type="status" value="NOT_ANNOTATED_CDS"/>
    <property type="molecule type" value="Genomic_DNA"/>
</dbReference>
<dbReference type="EMBL" id="AC158612">
    <property type="status" value="NOT_ANNOTATED_CDS"/>
    <property type="molecule type" value="Genomic_DNA"/>
</dbReference>
<dbReference type="EMBL" id="CH466553">
    <property type="protein sequence ID" value="EDL31768.1"/>
    <property type="molecule type" value="Genomic_DNA"/>
</dbReference>
<dbReference type="EMBL" id="BC141391">
    <property type="protein sequence ID" value="AAI41392.1"/>
    <property type="molecule type" value="mRNA"/>
</dbReference>
<dbReference type="CCDS" id="CCDS48611.1"/>
<dbReference type="RefSeq" id="NP_001398829.1">
    <property type="nucleotide sequence ID" value="NM_001411900.1"/>
</dbReference>
<dbReference type="RefSeq" id="NP_612174.2">
    <property type="nucleotide sequence ID" value="NM_138301.2"/>
</dbReference>
<dbReference type="EMDB" id="EMD-27889"/>
<dbReference type="EMDB" id="EMD-27890"/>
<dbReference type="SMR" id="Q91YD4"/>
<dbReference type="FunCoup" id="Q91YD4">
    <property type="interactions" value="218"/>
</dbReference>
<dbReference type="STRING" id="10090.ENSMUSP00000101040"/>
<dbReference type="iPTMnet" id="Q91YD4"/>
<dbReference type="MetOSite" id="Q91YD4"/>
<dbReference type="PhosphoSitePlus" id="Q91YD4"/>
<dbReference type="PaxDb" id="10090-ENSMUSP00000101040"/>
<dbReference type="ProteomicsDB" id="298138"/>
<dbReference type="Antibodypedia" id="10236">
    <property type="antibodies" value="316 antibodies from 33 providers"/>
</dbReference>
<dbReference type="DNASU" id="28240"/>
<dbReference type="Ensembl" id="ENSMUST00000105401.9">
    <property type="protein sequence ID" value="ENSMUSP00000101040.3"/>
    <property type="gene ID" value="ENSMUSG00000009292.19"/>
</dbReference>
<dbReference type="GeneID" id="28240"/>
<dbReference type="KEGG" id="mmu:28240"/>
<dbReference type="UCSC" id="uc007fwl.2">
    <property type="organism name" value="mouse"/>
</dbReference>
<dbReference type="AGR" id="MGI:1351901"/>
<dbReference type="CTD" id="7226"/>
<dbReference type="MGI" id="MGI:1351901">
    <property type="gene designation" value="Trpm2"/>
</dbReference>
<dbReference type="VEuPathDB" id="HostDB:ENSMUSG00000009292"/>
<dbReference type="eggNOG" id="KOG3614">
    <property type="taxonomic scope" value="Eukaryota"/>
</dbReference>
<dbReference type="eggNOG" id="KOG4195">
    <property type="taxonomic scope" value="Eukaryota"/>
</dbReference>
<dbReference type="GeneTree" id="ENSGT00940000156404"/>
<dbReference type="InParanoid" id="Q91YD4"/>
<dbReference type="OMA" id="EFLIYEP"/>
<dbReference type="OrthoDB" id="310870at2759"/>
<dbReference type="PhylomeDB" id="Q91YD4"/>
<dbReference type="TreeFam" id="TF314204"/>
<dbReference type="Reactome" id="R-MMU-3295583">
    <property type="pathway name" value="TRP channels"/>
</dbReference>
<dbReference type="Reactome" id="R-MMU-6798695">
    <property type="pathway name" value="Neutrophil degranulation"/>
</dbReference>
<dbReference type="BioGRID-ORCS" id="28240">
    <property type="hits" value="5 hits in 82 CRISPR screens"/>
</dbReference>
<dbReference type="PRO" id="PR:Q91YD4"/>
<dbReference type="Proteomes" id="UP000000589">
    <property type="component" value="Chromosome 10"/>
</dbReference>
<dbReference type="RNAct" id="Q91YD4">
    <property type="molecule type" value="protein"/>
</dbReference>
<dbReference type="Bgee" id="ENSMUSG00000009292">
    <property type="expression patterns" value="Expressed in granulocyte and 126 other cell types or tissues"/>
</dbReference>
<dbReference type="ExpressionAtlas" id="Q91YD4">
    <property type="expression patterns" value="baseline and differential"/>
</dbReference>
<dbReference type="GO" id="GO:0042995">
    <property type="term" value="C:cell projection"/>
    <property type="evidence" value="ECO:0007669"/>
    <property type="project" value="UniProtKB-SubCell"/>
</dbReference>
<dbReference type="GO" id="GO:0030659">
    <property type="term" value="C:cytoplasmic vesicle membrane"/>
    <property type="evidence" value="ECO:0000314"/>
    <property type="project" value="UniProtKB"/>
</dbReference>
<dbReference type="GO" id="GO:0005765">
    <property type="term" value="C:lysosomal membrane"/>
    <property type="evidence" value="ECO:0000314"/>
    <property type="project" value="UniProtKB"/>
</dbReference>
<dbReference type="GO" id="GO:0043204">
    <property type="term" value="C:perikaryon"/>
    <property type="evidence" value="ECO:0007669"/>
    <property type="project" value="UniProtKB-SubCell"/>
</dbReference>
<dbReference type="GO" id="GO:0005886">
    <property type="term" value="C:plasma membrane"/>
    <property type="evidence" value="ECO:0000314"/>
    <property type="project" value="UniProtKB"/>
</dbReference>
<dbReference type="GO" id="GO:0005509">
    <property type="term" value="F:calcium ion binding"/>
    <property type="evidence" value="ECO:0000250"/>
    <property type="project" value="UniProtKB"/>
</dbReference>
<dbReference type="GO" id="GO:0015278">
    <property type="term" value="F:intracellularly gated calcium channel activity"/>
    <property type="evidence" value="ECO:0000250"/>
    <property type="project" value="UniProtKB"/>
</dbReference>
<dbReference type="GO" id="GO:0099604">
    <property type="term" value="F:ligand-gated calcium channel activity"/>
    <property type="evidence" value="ECO:0000315"/>
    <property type="project" value="UniProtKB"/>
</dbReference>
<dbReference type="GO" id="GO:0005384">
    <property type="term" value="F:manganese ion transmembrane transporter activity"/>
    <property type="evidence" value="ECO:0000314"/>
    <property type="project" value="MGI"/>
</dbReference>
<dbReference type="GO" id="GO:0072571">
    <property type="term" value="F:mono-ADP-D-ribose binding"/>
    <property type="evidence" value="ECO:0000250"/>
    <property type="project" value="UniProtKB"/>
</dbReference>
<dbReference type="GO" id="GO:0005261">
    <property type="term" value="F:monoatomic cation channel activity"/>
    <property type="evidence" value="ECO:0000250"/>
    <property type="project" value="UniProtKB"/>
</dbReference>
<dbReference type="GO" id="GO:0005272">
    <property type="term" value="F:sodium channel activity"/>
    <property type="evidence" value="ECO:0007669"/>
    <property type="project" value="UniProtKB-KW"/>
</dbReference>
<dbReference type="GO" id="GO:0098703">
    <property type="term" value="P:calcium ion import across plasma membrane"/>
    <property type="evidence" value="ECO:0000315"/>
    <property type="project" value="UniProtKB"/>
</dbReference>
<dbReference type="GO" id="GO:0097553">
    <property type="term" value="P:calcium ion transmembrane import into cytosol"/>
    <property type="evidence" value="ECO:0000250"/>
    <property type="project" value="UniProtKB"/>
</dbReference>
<dbReference type="GO" id="GO:0070588">
    <property type="term" value="P:calcium ion transmembrane transport"/>
    <property type="evidence" value="ECO:0000250"/>
    <property type="project" value="UniProtKB"/>
</dbReference>
<dbReference type="GO" id="GO:0071277">
    <property type="term" value="P:cellular response to calcium ion"/>
    <property type="evidence" value="ECO:0000250"/>
    <property type="project" value="UniProtKB"/>
</dbReference>
<dbReference type="GO" id="GO:0070301">
    <property type="term" value="P:cellular response to hydrogen peroxide"/>
    <property type="evidence" value="ECO:0000250"/>
    <property type="project" value="UniProtKB"/>
</dbReference>
<dbReference type="GO" id="GO:0071502">
    <property type="term" value="P:cellular response to temperature stimulus"/>
    <property type="evidence" value="ECO:0000315"/>
    <property type="project" value="UniProtKB"/>
</dbReference>
<dbReference type="GO" id="GO:0002407">
    <property type="term" value="P:dendritic cell chemotaxis"/>
    <property type="evidence" value="ECO:0000315"/>
    <property type="project" value="UniProtKB"/>
</dbReference>
<dbReference type="GO" id="GO:0097028">
    <property type="term" value="P:dendritic cell differentiation"/>
    <property type="evidence" value="ECO:0000315"/>
    <property type="project" value="UniProtKB"/>
</dbReference>
<dbReference type="GO" id="GO:0006828">
    <property type="term" value="P:manganese ion transport"/>
    <property type="evidence" value="ECO:0000314"/>
    <property type="project" value="MGI"/>
</dbReference>
<dbReference type="GO" id="GO:0051289">
    <property type="term" value="P:protein homotetramerization"/>
    <property type="evidence" value="ECO:0000250"/>
    <property type="project" value="UniProtKB"/>
</dbReference>
<dbReference type="GO" id="GO:0032956">
    <property type="term" value="P:regulation of actin cytoskeleton organization"/>
    <property type="evidence" value="ECO:0000250"/>
    <property type="project" value="UniProtKB"/>
</dbReference>
<dbReference type="GO" id="GO:0051489">
    <property type="term" value="P:regulation of filopodium assembly"/>
    <property type="evidence" value="ECO:0000250"/>
    <property type="project" value="UniProtKB"/>
</dbReference>
<dbReference type="GO" id="GO:0051209">
    <property type="term" value="P:release of sequestered calcium ion into cytosol"/>
    <property type="evidence" value="ECO:0000315"/>
    <property type="project" value="UniProtKB"/>
</dbReference>
<dbReference type="GO" id="GO:0009408">
    <property type="term" value="P:response to heat"/>
    <property type="evidence" value="ECO:0000315"/>
    <property type="project" value="UniProtKB"/>
</dbReference>
<dbReference type="GO" id="GO:0033194">
    <property type="term" value="P:response to hydroperoxide"/>
    <property type="evidence" value="ECO:0000314"/>
    <property type="project" value="MGI"/>
</dbReference>
<dbReference type="GO" id="GO:0014074">
    <property type="term" value="P:response to purine-containing compound"/>
    <property type="evidence" value="ECO:0007669"/>
    <property type="project" value="Ensembl"/>
</dbReference>
<dbReference type="GO" id="GO:0001659">
    <property type="term" value="P:temperature homeostasis"/>
    <property type="evidence" value="ECO:0000315"/>
    <property type="project" value="UniProtKB"/>
</dbReference>
<dbReference type="GO" id="GO:0071577">
    <property type="term" value="P:zinc ion transmembrane transport"/>
    <property type="evidence" value="ECO:0000250"/>
    <property type="project" value="UniProtKB"/>
</dbReference>
<dbReference type="CDD" id="cd03670">
    <property type="entry name" value="NUDIX_ADPRase_Nudt9"/>
    <property type="match status" value="1"/>
</dbReference>
<dbReference type="FunFam" id="3.90.79.10:FF:000047">
    <property type="entry name" value="Transient receptor potential cation channel subfamily M member 2"/>
    <property type="match status" value="1"/>
</dbReference>
<dbReference type="Gene3D" id="3.40.50.450">
    <property type="match status" value="1"/>
</dbReference>
<dbReference type="Gene3D" id="3.90.79.10">
    <property type="entry name" value="Nucleoside Triphosphate Pyrophosphohydrolase"/>
    <property type="match status" value="1"/>
</dbReference>
<dbReference type="InterPro" id="IPR005821">
    <property type="entry name" value="Ion_trans_dom"/>
</dbReference>
<dbReference type="InterPro" id="IPR015797">
    <property type="entry name" value="NUDIX_hydrolase-like_dom_sf"/>
</dbReference>
<dbReference type="InterPro" id="IPR000086">
    <property type="entry name" value="NUDIX_hydrolase_dom"/>
</dbReference>
<dbReference type="InterPro" id="IPR050927">
    <property type="entry name" value="TRPM"/>
</dbReference>
<dbReference type="InterPro" id="IPR041491">
    <property type="entry name" value="TRPM_SLOG"/>
</dbReference>
<dbReference type="PANTHER" id="PTHR13800:SF2">
    <property type="entry name" value="TRANSIENT RECEPTOR POTENTIAL CATION CHANNEL SUBFAMILY M MEMBER 2"/>
    <property type="match status" value="1"/>
</dbReference>
<dbReference type="PANTHER" id="PTHR13800">
    <property type="entry name" value="TRANSIENT RECEPTOR POTENTIAL CATION CHANNEL, SUBFAMILY M, MEMBER 6"/>
    <property type="match status" value="1"/>
</dbReference>
<dbReference type="Pfam" id="PF00520">
    <property type="entry name" value="Ion_trans"/>
    <property type="match status" value="1"/>
</dbReference>
<dbReference type="Pfam" id="PF18139">
    <property type="entry name" value="LSDAT_euk"/>
    <property type="match status" value="1"/>
</dbReference>
<dbReference type="Pfam" id="PF25508">
    <property type="entry name" value="TRPM2"/>
    <property type="match status" value="1"/>
</dbReference>
<dbReference type="SUPFAM" id="SSF55811">
    <property type="entry name" value="Nudix"/>
    <property type="match status" value="1"/>
</dbReference>
<dbReference type="PROSITE" id="PS51462">
    <property type="entry name" value="NUDIX"/>
    <property type="match status" value="1"/>
</dbReference>
<comment type="function">
    <text evidence="3 6 9 12 13 14 15 16 17">Nonselective, voltage-independent cation channel that mediates Na(+) and Ca(2+) influx, leading to increased cytoplasmic Ca(2+) levels (PubMed:11804595, PubMed:19454650, PubMed:21753080, PubMed:22493272). Functions as a ligand-gated ion channel, gated by intracellular adenosine diphosphate ribose (ADP-ribose), Ca(2+), warm temperature, and oxidative stress. The precise physiological activators are under debate; the true, physiological activators may be ADP-ribose and ADP-ribose-2'-phosphate (By similarity). Binding of ADP-ribose to the cytoplasmic Nudix domain causes a conformation change; the channel is primed but still requires Ca(2+) binding to trigger channel opening. Extracellular Ca(2+) passes through the channel and increases channel activity (By similarity). Also contributes to Ca(2+) release from intracellular stores in response to ADP-ribose (PubMed:21753080). Plays a role in numerous processes that involve signaling via intracellular Ca(2+) levels (PubMed:21753080). Besides, mediates the release of lysosomal Zn(2+) stores in response to reactive oxygen species, leading to increased cytosolic Zn(2+) levels (By similarity). Plays a role in mediating behavorial and physiological responses to moderate heat and thereby contributes to body temperature homeostasis (PubMed:27533035, PubMed:27562954). Plays a role in insulin secretion, a process that requires increased cytoplasmic Ca(2+) levels (PubMed:20921208, PubMed:25817999). Required for normal IFNG and cytokine secretion and normal innate immune immunity in response to bacterial infection (PubMed:21709234). Required for normal phagocytosis and cytokine release by macrophages exposed to zymosan (in vitro) (PubMed:22493272). Plays a role in dendritic cell differentiation and maturation, and in dendritic cell chemotaxis via its role in regulating cytoplasmic Ca(2+) levels (PubMed:21753080). Plays a role in the regulation of the reorganization of the actin cytoskeleton and filopodia formation in response to reactive oxygen species via its function in increasing cytoplasmic Ca(2+) and Zn(2+) levels (By similarity). Confers susceptibility to cell death following oxidative stress (PubMed:25562606).</text>
</comment>
<comment type="catalytic activity">
    <reaction evidence="3">
        <text>Ca(2+)(in) = Ca(2+)(out)</text>
        <dbReference type="Rhea" id="RHEA:29671"/>
        <dbReference type="ChEBI" id="CHEBI:29108"/>
    </reaction>
</comment>
<comment type="catalytic activity">
    <reaction evidence="3">
        <text>Na(+)(in) = Na(+)(out)</text>
        <dbReference type="Rhea" id="RHEA:34963"/>
        <dbReference type="ChEBI" id="CHEBI:29101"/>
    </reaction>
</comment>
<comment type="activity regulation">
    <text evidence="3 9 12 13 15 16 17">Activated by intracellular ADP-ribose, beta-NAD (NAD(+)) and similar compounds, and by oxidative stress caused by reactive oxygen or nitrogen species (PubMed:19454650, PubMed:21753080, PubMed:22493272). Ca(2+) and PI(4,5)P2 are required for channel opening by ADP-ribose (By similarity). Activated by moderate heat (35 to 40 degrees Celsius) (PubMed:27533035, PubMed:27562954). Activation by ADP-ribose and beta-NAD is strongly increased by moderate heat (35 to 40 degrees Celsius). Likewise, reactive oxygen species lower the threshold for activation by moderate heat (37 degrees Celsius) (PubMed:22493272, PubMed:25817999). Inactivated by exposure to extracellular pH between 4.0 and 6.5; irreversibly inactivated when open channels are exposed to extracellular pH between 4.0 and 6.5, while pre-exposure of closed channels to extracellular pH 5.5 gives rise to currents that rapidly inactivate, but protects against irreversible inactivation. Inactivated by intracellular ATP. Activated by arachidonic acid. Inhibited by 2-aminoethyl diphenylborinate (2-APB) (By similarity).</text>
</comment>
<comment type="subunit">
    <text evidence="3">Homotetramer.</text>
</comment>
<comment type="subcellular location">
    <subcellularLocation>
        <location evidence="6 9 12 13">Cell membrane</location>
        <topology evidence="3">Multi-pass membrane protein</topology>
    </subcellularLocation>
    <subcellularLocation>
        <location evidence="2">Perikaryon</location>
    </subcellularLocation>
    <subcellularLocation>
        <location evidence="2">Cell projection</location>
    </subcellularLocation>
    <subcellularLocation>
        <location evidence="12">Cytoplasmic vesicle</location>
    </subcellularLocation>
    <subcellularLocation>
        <location evidence="12">Lysosome</location>
    </subcellularLocation>
    <text evidence="2 12">Detected at the cell membrane and in intracellular vesicles in cortical neurons. Detected on neuronal cell bodies and neurites (By similarity). Detected on the cell membrane in polymorphonuclear neutrophils (PubMed:21753080). Detected on cytoplasmic vesicles and lysosomes in immature bone marrow dendritic cells (PubMed:21753080).</text>
</comment>
<comment type="tissue specificity">
    <text evidence="6 7 8 10 12 17">Detected in the preoptic area of the hypothalamus, a brain area involved in body temperature control (PubMed:27562954). Detected in beta-cells in pancreas islets (at protein level) (PubMed:16601673, PubMed:20921208). Detected in brain cortex, striatum, hippocampus CA1, CA2 and CA3 layers, and in the Purkinje cell layer in cerebellum (PubMed:15708008). Widely expressed, with highest levels in lung, spleen, eye and brain (PubMed:11804595). Detected in dendritic cells and in polymorphonuclear neutrophils (PubMed:21753080).</text>
</comment>
<comment type="domain">
    <text evidence="3">Contains two binding sites for ADP-ribose, one in the N-terminal part of the channel and the other in the C-terminal nudix hydrolase domain. Both sites seem to have a role in channel opening, but the interaction of ADP-ribose with the N-terminal site is absolutely required for channel activation.</text>
</comment>
<comment type="PTM">
    <text evidence="18">Protein kinase C (PKC)-mediated phosphorylation of TRPM2 at Thr-738 counteracts the effect of cytosolic Ca(2+) and elevates the temperature threshold.</text>
</comment>
<comment type="disruption phenotype">
    <text evidence="10 11 16">Mutant mice display no obvious phenotype, but display increased blood glucose levels when fed ad libitum (PubMed:20921208). After oral or intraperitoneal glucose administration, they display increased blood glucose and lower plasma insulin levels; basal fasting glucose and insulin levels are not altered (PubMed:20921208). Ca(2+) influx into beta-cells is unchanged under basal conditions or upon stimulation with glucose up to 8.3 mM; Ca(2+) influx is decreased upon stimulation with high glucose levels (16.7 mM) (PubMed:20921208). Likewise, insulin secretion is decreased only upon stimulation with 11.2 or 16.7 mM glucose, but not in response to more moderate glucose levels (PubMed:20921208). Mutant mice have a reduced number of neurons that are activated by warm temperature (34 to 43 degrees Celsius) in their dorsal root ganglia and superior cervical ganglia (PubMed:27533035). Mutant mice show altered behavorial responses to environmental temperature; contrary to wild-type they show no preference for a cooler environment when exposed to 38 degrees Celsius (PubMed:27533035). Besides, they spend less time than wild-type in a cooler environment (23 degrees Celsius) (PubMed:27533035). Mutant mice develop higher fever in response to prostaglandin E2 injection into the preoptic area of the hypothalamus, a brain area involved in body temperature control (PubMed:27562954). Mutant mice display a defective innate immune response and are highly susceptible to infection by L.monocytogenes (PubMed:21709234). They are unable to contain the bacterial infection; contrary to wild-type, they die within a few days after infection (PubMed:21709234). The defective immune response is due to impaired secretion of Il12b and IFNG; mice are rescued by treatment with recombinant IFNG (PubMed:21709234).</text>
</comment>
<comment type="similarity">
    <text evidence="19">Belongs to the transient receptor (TC 1.A.4) family. LTrpC subfamily. TRPM2 sub-subfamily.</text>
</comment>